<accession>I1S2K3</accession>
<accession>A0A0E0SN32</accession>
<organism>
    <name type="scientific">Gibberella zeae (strain ATCC MYA-4620 / CBS 123657 / FGSC 9075 / NRRL 31084 / PH-1)</name>
    <name type="common">Wheat head blight fungus</name>
    <name type="synonym">Fusarium graminearum</name>
    <dbReference type="NCBI Taxonomy" id="229533"/>
    <lineage>
        <taxon>Eukaryota</taxon>
        <taxon>Fungi</taxon>
        <taxon>Dikarya</taxon>
        <taxon>Ascomycota</taxon>
        <taxon>Pezizomycotina</taxon>
        <taxon>Sordariomycetes</taxon>
        <taxon>Hypocreomycetidae</taxon>
        <taxon>Hypocreales</taxon>
        <taxon>Nectriaceae</taxon>
        <taxon>Fusarium</taxon>
    </lineage>
</organism>
<protein>
    <recommendedName>
        <fullName>Endo-1,4-beta-xylanase A</fullName>
        <shortName>Xylanase A</shortName>
        <ecNumber>3.2.1.8</ecNumber>
    </recommendedName>
    <alternativeName>
        <fullName>1,4-beta-D-xylan xylanohydrolase A</fullName>
    </alternativeName>
</protein>
<gene>
    <name type="primary">XYLA</name>
    <name type="ORF">FGRRES_10999</name>
    <name type="ORF">FGSG_10999</name>
</gene>
<feature type="signal peptide" evidence="1">
    <location>
        <begin position="1"/>
        <end position="19"/>
    </location>
</feature>
<feature type="chain" id="PRO_0000429609" description="Endo-1,4-beta-xylanase A">
    <location>
        <begin position="20"/>
        <end position="231"/>
    </location>
</feature>
<feature type="domain" description="GH11" evidence="2">
    <location>
        <begin position="41"/>
        <end position="229"/>
    </location>
</feature>
<feature type="active site" description="Nucleophile" evidence="3">
    <location>
        <position position="125"/>
    </location>
</feature>
<feature type="active site" description="Proton donor" evidence="4">
    <location>
        <position position="216"/>
    </location>
</feature>
<feature type="glycosylation site" description="N-linked (GlcNAc...) asparagine" evidence="1">
    <location>
        <position position="32"/>
    </location>
</feature>
<proteinExistence type="evidence at protein level"/>
<comment type="function">
    <text evidence="8">Endo-1,4-beta-xylanase involved in the hydrolysis of xylan, a major structural heterogeneous polysaccharide found in plant biomass representing the second most abundant polysaccharide in the biosphere, after cellulose. Plays an important role in causing fusarium head blight (FHB) on cereal crops.</text>
</comment>
<comment type="catalytic activity">
    <reaction evidence="5 8">
        <text>Endohydrolysis of (1-&gt;4)-beta-D-xylosidic linkages in xylans.</text>
        <dbReference type="EC" id="3.2.1.8"/>
    </reaction>
</comment>
<comment type="activity regulation">
    <text evidence="5 8">Inhibited by the proteinaceous endoxylanase inhibitor I from T.aestivum (TAXI-I).</text>
</comment>
<comment type="biophysicochemical properties">
    <kinetics>
        <KM evidence="5 8">3.5 mg/ml for wheat flour arabinoxylan</KM>
        <KM evidence="5 8">3.1 mg/ml for soluble oat spelt xylan</KM>
        <KM evidence="5 8">5.1 mg/ml for soluble birchwood xylan</KM>
    </kinetics>
    <phDependence>
        <text evidence="5 8">Optimum pH is 8.0.</text>
    </phDependence>
    <temperatureDependence>
        <text evidence="5 8">Optimum temperature is 40 degrees Celsius.</text>
    </temperatureDependence>
</comment>
<comment type="pathway">
    <text>Glycan degradation; xylan degradation.</text>
</comment>
<comment type="subcellular location">
    <subcellularLocation>
        <location evidence="5">Secreted</location>
    </subcellularLocation>
</comment>
<comment type="induction">
    <text evidence="6 7">Expression is highly induced by xylan.</text>
</comment>
<comment type="similarity">
    <text evidence="9">Belongs to the glycosyl hydrolase 11 (cellulase G) family.</text>
</comment>
<reference key="1">
    <citation type="journal article" date="2007" name="Science">
        <title>The Fusarium graminearum genome reveals a link between localized polymorphism and pathogen specialization.</title>
        <authorList>
            <person name="Cuomo C.A."/>
            <person name="Gueldener U."/>
            <person name="Xu J.-R."/>
            <person name="Trail F."/>
            <person name="Turgeon B.G."/>
            <person name="Di Pietro A."/>
            <person name="Walton J.D."/>
            <person name="Ma L.-J."/>
            <person name="Baker S.E."/>
            <person name="Rep M."/>
            <person name="Adam G."/>
            <person name="Antoniw J."/>
            <person name="Baldwin T."/>
            <person name="Calvo S.E."/>
            <person name="Chang Y.-L."/>
            <person name="DeCaprio D."/>
            <person name="Gale L.R."/>
            <person name="Gnerre S."/>
            <person name="Goswami R.S."/>
            <person name="Hammond-Kosack K."/>
            <person name="Harris L.J."/>
            <person name="Hilburn K."/>
            <person name="Kennell J.C."/>
            <person name="Kroken S."/>
            <person name="Magnuson J.K."/>
            <person name="Mannhaupt G."/>
            <person name="Mauceli E.W."/>
            <person name="Mewes H.-W."/>
            <person name="Mitterbauer R."/>
            <person name="Muehlbauer G."/>
            <person name="Muensterkoetter M."/>
            <person name="Nelson D."/>
            <person name="O'Donnell K."/>
            <person name="Ouellet T."/>
            <person name="Qi W."/>
            <person name="Quesneville H."/>
            <person name="Roncero M.I.G."/>
            <person name="Seong K.-Y."/>
            <person name="Tetko I.V."/>
            <person name="Urban M."/>
            <person name="Waalwijk C."/>
            <person name="Ward T.J."/>
            <person name="Yao J."/>
            <person name="Birren B.W."/>
            <person name="Kistler H.C."/>
        </authorList>
    </citation>
    <scope>NUCLEOTIDE SEQUENCE [LARGE SCALE GENOMIC DNA]</scope>
    <source>
        <strain>ATCC MYA-4620 / CBS 123657 / FGSC 9075 / NRRL 31084 / PH-1</strain>
    </source>
</reference>
<reference key="2">
    <citation type="journal article" date="2010" name="Nature">
        <title>Comparative genomics reveals mobile pathogenicity chromosomes in Fusarium.</title>
        <authorList>
            <person name="Ma L.-J."/>
            <person name="van der Does H.C."/>
            <person name="Borkovich K.A."/>
            <person name="Coleman J.J."/>
            <person name="Daboussi M.-J."/>
            <person name="Di Pietro A."/>
            <person name="Dufresne M."/>
            <person name="Freitag M."/>
            <person name="Grabherr M."/>
            <person name="Henrissat B."/>
            <person name="Houterman P.M."/>
            <person name="Kang S."/>
            <person name="Shim W.-B."/>
            <person name="Woloshuk C."/>
            <person name="Xie X."/>
            <person name="Xu J.-R."/>
            <person name="Antoniw J."/>
            <person name="Baker S.E."/>
            <person name="Bluhm B.H."/>
            <person name="Breakspear A."/>
            <person name="Brown D.W."/>
            <person name="Butchko R.A.E."/>
            <person name="Chapman S."/>
            <person name="Coulson R."/>
            <person name="Coutinho P.M."/>
            <person name="Danchin E.G.J."/>
            <person name="Diener A."/>
            <person name="Gale L.R."/>
            <person name="Gardiner D.M."/>
            <person name="Goff S."/>
            <person name="Hammond-Kosack K.E."/>
            <person name="Hilburn K."/>
            <person name="Hua-Van A."/>
            <person name="Jonkers W."/>
            <person name="Kazan K."/>
            <person name="Kodira C.D."/>
            <person name="Koehrsen M."/>
            <person name="Kumar L."/>
            <person name="Lee Y.-H."/>
            <person name="Li L."/>
            <person name="Manners J.M."/>
            <person name="Miranda-Saavedra D."/>
            <person name="Mukherjee M."/>
            <person name="Park G."/>
            <person name="Park J."/>
            <person name="Park S.-Y."/>
            <person name="Proctor R.H."/>
            <person name="Regev A."/>
            <person name="Ruiz-Roldan M.C."/>
            <person name="Sain D."/>
            <person name="Sakthikumar S."/>
            <person name="Sykes S."/>
            <person name="Schwartz D.C."/>
            <person name="Turgeon B.G."/>
            <person name="Wapinski I."/>
            <person name="Yoder O."/>
            <person name="Young S."/>
            <person name="Zeng Q."/>
            <person name="Zhou S."/>
            <person name="Galagan J."/>
            <person name="Cuomo C.A."/>
            <person name="Kistler H.C."/>
            <person name="Rep M."/>
        </authorList>
    </citation>
    <scope>GENOME REANNOTATION</scope>
    <source>
        <strain>ATCC MYA-4620 / CBS 123657 / FGSC 9075 / NRRL 31084 / PH-1</strain>
    </source>
</reference>
<reference key="3">
    <citation type="journal article" date="2015" name="BMC Genomics">
        <title>The completed genome sequence of the pathogenic ascomycete fungus Fusarium graminearum.</title>
        <authorList>
            <person name="King R."/>
            <person name="Urban M."/>
            <person name="Hammond-Kosack M.C.U."/>
            <person name="Hassani-Pak K."/>
            <person name="Hammond-Kosack K.E."/>
        </authorList>
    </citation>
    <scope>NUCLEOTIDE SEQUENCE [LARGE SCALE GENOMIC DNA]</scope>
    <source>
        <strain>ATCC MYA-4620 / CBS 123657 / FGSC 9075 / NRRL 31084 / PH-1</strain>
    </source>
</reference>
<reference key="4">
    <citation type="journal article" date="2005" name="Biochem. Biophys. Res. Commun.">
        <title>Cloning and characterization of two endoxylanases from the cereal phytopathogen Fusarium graminearum and their inhibition profile against endoxylanase inhibitors from wheat.</title>
        <authorList>
            <person name="Belien T."/>
            <person name="Van Campenhout S."/>
            <person name="Van Acker M."/>
            <person name="Volckaert G."/>
        </authorList>
    </citation>
    <scope>SUBCELLULAR LOCATION</scope>
    <scope>CATALYTIC ACTIVITY</scope>
    <scope>BIOPHYSICOCHEMICAL PROPERTIES</scope>
    <scope>ACTIVITY REGULATION</scope>
</reference>
<reference key="5">
    <citation type="journal article" date="2006" name="Biochem. Biophys. Res. Commun.">
        <title>Fusarium graminearum on plant cell wall: no fewer than 30 xylanase genes transcribed.</title>
        <authorList>
            <person name="Hatsch D."/>
            <person name="Phalip V."/>
            <person name="Petkovski E."/>
            <person name="Jeltsch J.M."/>
        </authorList>
    </citation>
    <scope>INDUCTION</scope>
</reference>
<reference key="6">
    <citation type="journal article" date="2009" name="Enzyme Microb. Technol.">
        <title>Fusarium graminearum xylanases show different functional stabilities, substrate specificities and inhibition sensitivities.</title>
        <authorList>
            <person name="Pollet A."/>
            <person name="Belien T."/>
            <person name="Fierens K."/>
            <person name="Delcour J.A."/>
            <person name="Courtin C.M."/>
        </authorList>
    </citation>
    <scope>FUNCTION</scope>
    <scope>CATALYTIC ACTIVITY</scope>
    <scope>BIOPHYSICOCHEMICAL PROPERTIES</scope>
    <scope>ACTIVITY REGULATION</scope>
</reference>
<reference key="7">
    <citation type="journal article" date="2013" name="Plant Physiol. Biochem.">
        <title>A Fusarium graminearum xylanase expressed during wheat infection is a necrotizing factor but is not essential for virulence.</title>
        <authorList>
            <person name="Sella L."/>
            <person name="Gazzetti K."/>
            <person name="Faoro F."/>
            <person name="Odorizzi S."/>
            <person name="D'Ovidio R."/>
            <person name="Schafer W."/>
            <person name="Favaron F."/>
        </authorList>
    </citation>
    <scope>INDUCTION</scope>
</reference>
<keyword id="KW-0119">Carbohydrate metabolism</keyword>
<keyword id="KW-0325">Glycoprotein</keyword>
<keyword id="KW-0326">Glycosidase</keyword>
<keyword id="KW-0378">Hydrolase</keyword>
<keyword id="KW-0624">Polysaccharide degradation</keyword>
<keyword id="KW-1185">Reference proteome</keyword>
<keyword id="KW-0964">Secreted</keyword>
<keyword id="KW-0732">Signal</keyword>
<keyword id="KW-0843">Virulence</keyword>
<keyword id="KW-0858">Xylan degradation</keyword>
<sequence length="231" mass="25845">MVSFKSLLVAVSALTGALARPFDFLDERDDGNATSVLEARQVTGNSEGYHNGYFYSWWSDGGGYAQYRMGEGSHYQVDWRNTGNFVGGKGWNPGTGRTINYGGSFNPQGNGYLCVYGWTRGPLVEYYVIESYGSYNPGSQAQHRGTVYTDGDTYDLYMSTRYQQPSIDGVQTFNQYWSIRRNKRTSGSVNMQNHFNAWRSAGMNLGNHYYQILATEGYQSSGSSSIYVQTS</sequence>
<evidence type="ECO:0000255" key="1"/>
<evidence type="ECO:0000255" key="2">
    <source>
        <dbReference type="PROSITE-ProRule" id="PRU01097"/>
    </source>
</evidence>
<evidence type="ECO:0000255" key="3">
    <source>
        <dbReference type="PROSITE-ProRule" id="PRU10062"/>
    </source>
</evidence>
<evidence type="ECO:0000255" key="4">
    <source>
        <dbReference type="PROSITE-ProRule" id="PRU10063"/>
    </source>
</evidence>
<evidence type="ECO:0000269" key="5">
    <source>
    </source>
</evidence>
<evidence type="ECO:0000269" key="6">
    <source>
    </source>
</evidence>
<evidence type="ECO:0000269" key="7">
    <source>
    </source>
</evidence>
<evidence type="ECO:0000269" key="8">
    <source ref="6"/>
</evidence>
<evidence type="ECO:0000305" key="9"/>
<name>XYNA_GIBZE</name>
<dbReference type="EC" id="3.2.1.8"/>
<dbReference type="EMBL" id="AY289919">
    <property type="status" value="NOT_ANNOTATED_CDS"/>
    <property type="molecule type" value="Genomic_DNA"/>
</dbReference>
<dbReference type="EMBL" id="AY648860">
    <property type="status" value="NOT_ANNOTATED_CDS"/>
    <property type="molecule type" value="Genomic_DNA"/>
</dbReference>
<dbReference type="EMBL" id="DS231670">
    <property type="protein sequence ID" value="ESU17749.1"/>
    <property type="molecule type" value="Genomic_DNA"/>
</dbReference>
<dbReference type="EMBL" id="HG970334">
    <property type="protein sequence ID" value="CEF87845.1"/>
    <property type="molecule type" value="Genomic_DNA"/>
</dbReference>
<dbReference type="RefSeq" id="XP_011325371.1">
    <property type="nucleotide sequence ID" value="XM_011327069.1"/>
</dbReference>
<dbReference type="SMR" id="I1S2K3"/>
<dbReference type="STRING" id="229533.I1S2K3"/>
<dbReference type="GlyCosmos" id="I1S2K3">
    <property type="glycosylation" value="1 site, No reported glycans"/>
</dbReference>
<dbReference type="GeneID" id="23557873"/>
<dbReference type="KEGG" id="fgr:FGSG_10999"/>
<dbReference type="VEuPathDB" id="FungiDB:FGRAMPH1_01G20977"/>
<dbReference type="eggNOG" id="ENOG502RXA7">
    <property type="taxonomic scope" value="Eukaryota"/>
</dbReference>
<dbReference type="HOGENOM" id="CLU_052631_0_0_1"/>
<dbReference type="InParanoid" id="I1S2K3"/>
<dbReference type="OrthoDB" id="106801at110618"/>
<dbReference type="UniPathway" id="UPA00114"/>
<dbReference type="Proteomes" id="UP000070720">
    <property type="component" value="Chromosome 3"/>
</dbReference>
<dbReference type="GO" id="GO:0005576">
    <property type="term" value="C:extracellular region"/>
    <property type="evidence" value="ECO:0007669"/>
    <property type="project" value="UniProtKB-SubCell"/>
</dbReference>
<dbReference type="GO" id="GO:0031176">
    <property type="term" value="F:endo-1,4-beta-xylanase activity"/>
    <property type="evidence" value="ECO:0007669"/>
    <property type="project" value="UniProtKB-EC"/>
</dbReference>
<dbReference type="GO" id="GO:0045493">
    <property type="term" value="P:xylan catabolic process"/>
    <property type="evidence" value="ECO:0007669"/>
    <property type="project" value="UniProtKB-UniPathway"/>
</dbReference>
<dbReference type="FunFam" id="2.60.120.180:FF:000001">
    <property type="entry name" value="Endo-1,4-beta-xylanase"/>
    <property type="match status" value="1"/>
</dbReference>
<dbReference type="Gene3D" id="2.60.120.180">
    <property type="match status" value="1"/>
</dbReference>
<dbReference type="InterPro" id="IPR013320">
    <property type="entry name" value="ConA-like_dom_sf"/>
</dbReference>
<dbReference type="InterPro" id="IPR013319">
    <property type="entry name" value="GH11/12"/>
</dbReference>
<dbReference type="InterPro" id="IPR018208">
    <property type="entry name" value="GH11_AS_1"/>
</dbReference>
<dbReference type="InterPro" id="IPR033119">
    <property type="entry name" value="GH11_AS_2"/>
</dbReference>
<dbReference type="InterPro" id="IPR033123">
    <property type="entry name" value="GH11_dom"/>
</dbReference>
<dbReference type="InterPro" id="IPR001137">
    <property type="entry name" value="Glyco_hydro_11"/>
</dbReference>
<dbReference type="PANTHER" id="PTHR46828">
    <property type="entry name" value="ENDO-1,4-BETA-XYLANASE A-RELATED"/>
    <property type="match status" value="1"/>
</dbReference>
<dbReference type="PANTHER" id="PTHR46828:SF2">
    <property type="entry name" value="ENDO-1,4-BETA-XYLANASE A-RELATED"/>
    <property type="match status" value="1"/>
</dbReference>
<dbReference type="Pfam" id="PF00457">
    <property type="entry name" value="Glyco_hydro_11"/>
    <property type="match status" value="1"/>
</dbReference>
<dbReference type="PRINTS" id="PR00911">
    <property type="entry name" value="GLHYDRLASE11"/>
</dbReference>
<dbReference type="SUPFAM" id="SSF49899">
    <property type="entry name" value="Concanavalin A-like lectins/glucanases"/>
    <property type="match status" value="1"/>
</dbReference>
<dbReference type="PROSITE" id="PS00776">
    <property type="entry name" value="GH11_1"/>
    <property type="match status" value="1"/>
</dbReference>
<dbReference type="PROSITE" id="PS00777">
    <property type="entry name" value="GH11_2"/>
    <property type="match status" value="1"/>
</dbReference>
<dbReference type="PROSITE" id="PS51761">
    <property type="entry name" value="GH11_3"/>
    <property type="match status" value="1"/>
</dbReference>